<comment type="similarity">
    <text evidence="1">Belongs to the bacterial ribosomal protein bL34 family.</text>
</comment>
<feature type="chain" id="PRO_0000187430" description="Large ribosomal subunit protein bL34">
    <location>
        <begin position="1"/>
        <end position="44"/>
    </location>
</feature>
<feature type="region of interest" description="Disordered" evidence="2">
    <location>
        <begin position="1"/>
        <end position="44"/>
    </location>
</feature>
<feature type="compositionally biased region" description="Basic residues" evidence="2">
    <location>
        <begin position="1"/>
        <end position="19"/>
    </location>
</feature>
<feature type="compositionally biased region" description="Basic residues" evidence="2">
    <location>
        <begin position="31"/>
        <end position="44"/>
    </location>
</feature>
<reference key="1">
    <citation type="journal article" date="2002" name="Nucleic Acids Res.">
        <title>Genome sequence of Oceanobacillus iheyensis isolated from the Iheya Ridge and its unexpected adaptive capabilities to extreme environments.</title>
        <authorList>
            <person name="Takami H."/>
            <person name="Takaki Y."/>
            <person name="Uchiyama I."/>
        </authorList>
    </citation>
    <scope>NUCLEOTIDE SEQUENCE [LARGE SCALE GENOMIC DNA]</scope>
    <source>
        <strain>DSM 14371 / CIP 107618 / JCM 11309 / KCTC 3954 / HTE831</strain>
    </source>
</reference>
<gene>
    <name evidence="1" type="primary">rpmH</name>
    <name type="ordered locus">OB3496</name>
</gene>
<evidence type="ECO:0000255" key="1">
    <source>
        <dbReference type="HAMAP-Rule" id="MF_00391"/>
    </source>
</evidence>
<evidence type="ECO:0000256" key="2">
    <source>
        <dbReference type="SAM" id="MobiDB-lite"/>
    </source>
</evidence>
<evidence type="ECO:0000305" key="3"/>
<organism>
    <name type="scientific">Oceanobacillus iheyensis (strain DSM 14371 / CIP 107618 / JCM 11309 / KCTC 3954 / HTE831)</name>
    <dbReference type="NCBI Taxonomy" id="221109"/>
    <lineage>
        <taxon>Bacteria</taxon>
        <taxon>Bacillati</taxon>
        <taxon>Bacillota</taxon>
        <taxon>Bacilli</taxon>
        <taxon>Bacillales</taxon>
        <taxon>Bacillaceae</taxon>
        <taxon>Oceanobacillus</taxon>
    </lineage>
</organism>
<dbReference type="EMBL" id="BA000028">
    <property type="protein sequence ID" value="BAC15452.1"/>
    <property type="molecule type" value="Genomic_DNA"/>
</dbReference>
<dbReference type="RefSeq" id="WP_011067894.1">
    <property type="nucleotide sequence ID" value="NC_004193.1"/>
</dbReference>
<dbReference type="SMR" id="Q8EKT9"/>
<dbReference type="STRING" id="221109.gene:10735748"/>
<dbReference type="KEGG" id="oih:OB3496"/>
<dbReference type="eggNOG" id="COG0230">
    <property type="taxonomic scope" value="Bacteria"/>
</dbReference>
<dbReference type="HOGENOM" id="CLU_129938_2_0_9"/>
<dbReference type="OrthoDB" id="9804164at2"/>
<dbReference type="PhylomeDB" id="Q8EKT9"/>
<dbReference type="Proteomes" id="UP000000822">
    <property type="component" value="Chromosome"/>
</dbReference>
<dbReference type="GO" id="GO:1990904">
    <property type="term" value="C:ribonucleoprotein complex"/>
    <property type="evidence" value="ECO:0007669"/>
    <property type="project" value="UniProtKB-KW"/>
</dbReference>
<dbReference type="GO" id="GO:0005840">
    <property type="term" value="C:ribosome"/>
    <property type="evidence" value="ECO:0007669"/>
    <property type="project" value="UniProtKB-KW"/>
</dbReference>
<dbReference type="GO" id="GO:0003735">
    <property type="term" value="F:structural constituent of ribosome"/>
    <property type="evidence" value="ECO:0007669"/>
    <property type="project" value="InterPro"/>
</dbReference>
<dbReference type="GO" id="GO:0006412">
    <property type="term" value="P:translation"/>
    <property type="evidence" value="ECO:0007669"/>
    <property type="project" value="UniProtKB-UniRule"/>
</dbReference>
<dbReference type="FunFam" id="1.10.287.3980:FF:000001">
    <property type="entry name" value="Mitochondrial ribosomal protein L34"/>
    <property type="match status" value="1"/>
</dbReference>
<dbReference type="Gene3D" id="1.10.287.3980">
    <property type="match status" value="1"/>
</dbReference>
<dbReference type="HAMAP" id="MF_00391">
    <property type="entry name" value="Ribosomal_bL34"/>
    <property type="match status" value="1"/>
</dbReference>
<dbReference type="InterPro" id="IPR000271">
    <property type="entry name" value="Ribosomal_bL34"/>
</dbReference>
<dbReference type="InterPro" id="IPR020939">
    <property type="entry name" value="Ribosomal_bL34_CS"/>
</dbReference>
<dbReference type="NCBIfam" id="TIGR01030">
    <property type="entry name" value="rpmH_bact"/>
    <property type="match status" value="1"/>
</dbReference>
<dbReference type="PANTHER" id="PTHR14503:SF4">
    <property type="entry name" value="LARGE RIBOSOMAL SUBUNIT PROTEIN BL34M"/>
    <property type="match status" value="1"/>
</dbReference>
<dbReference type="PANTHER" id="PTHR14503">
    <property type="entry name" value="MITOCHONDRIAL RIBOSOMAL PROTEIN 34 FAMILY MEMBER"/>
    <property type="match status" value="1"/>
</dbReference>
<dbReference type="Pfam" id="PF00468">
    <property type="entry name" value="Ribosomal_L34"/>
    <property type="match status" value="1"/>
</dbReference>
<dbReference type="PROSITE" id="PS00784">
    <property type="entry name" value="RIBOSOMAL_L34"/>
    <property type="match status" value="1"/>
</dbReference>
<accession>Q8EKT9</accession>
<keyword id="KW-1185">Reference proteome</keyword>
<keyword id="KW-0687">Ribonucleoprotein</keyword>
<keyword id="KW-0689">Ribosomal protein</keyword>
<protein>
    <recommendedName>
        <fullName evidence="1">Large ribosomal subunit protein bL34</fullName>
    </recommendedName>
    <alternativeName>
        <fullName evidence="3">50S ribosomal protein L34</fullName>
    </alternativeName>
</protein>
<sequence length="44" mass="5293">MKRTFQPNNRKRKKVHGFRARMSTKNGRNVLARRRRKGRKVLSA</sequence>
<name>RL34_OCEIH</name>
<proteinExistence type="inferred from homology"/>